<accession>Q0W1X3</accession>
<reference key="1">
    <citation type="journal article" date="2006" name="Science">
        <title>Genome of rice cluster I archaea -- the key methane producers in the rice rhizosphere.</title>
        <authorList>
            <person name="Erkel C."/>
            <person name="Kube M."/>
            <person name="Reinhardt R."/>
            <person name="Liesack W."/>
        </authorList>
    </citation>
    <scope>NUCLEOTIDE SEQUENCE [LARGE SCALE GENOMIC DNA]</scope>
    <source>
        <strain>DSM 22066 / NBRC 105507 / MRE50</strain>
    </source>
</reference>
<organism>
    <name type="scientific">Methanocella arvoryzae (strain DSM 22066 / NBRC 105507 / MRE50)</name>
    <dbReference type="NCBI Taxonomy" id="351160"/>
    <lineage>
        <taxon>Archaea</taxon>
        <taxon>Methanobacteriati</taxon>
        <taxon>Methanobacteriota</taxon>
        <taxon>Stenosarchaea group</taxon>
        <taxon>Methanomicrobia</taxon>
        <taxon>Methanocellales</taxon>
        <taxon>Methanocellaceae</taxon>
        <taxon>Methanocella</taxon>
    </lineage>
</organism>
<comment type="function">
    <text evidence="1">One of the primary rRNA binding proteins, it binds directly to 16S rRNA central domain where it helps coordinate assembly of the platform of the 30S subunit.</text>
</comment>
<comment type="subunit">
    <text evidence="1">Part of the 30S ribosomal subunit.</text>
</comment>
<comment type="similarity">
    <text evidence="1">Belongs to the universal ribosomal protein uS8 family.</text>
</comment>
<evidence type="ECO:0000255" key="1">
    <source>
        <dbReference type="HAMAP-Rule" id="MF_01302"/>
    </source>
</evidence>
<evidence type="ECO:0000305" key="2"/>
<sequence length="130" mass="14187">MVLMDPLANALSVIKNAETTGKTDCVIDPASKIIGNVLKVMQDQGYVGEFEFVDNGKAGQLKVKLIGKINKCGVVKPRFAVGKTEMEKWEKRYLPARNFGTLILTTSKGVMSHYDAAKMGIGGEILAYVY</sequence>
<protein>
    <recommendedName>
        <fullName evidence="1">Small ribosomal subunit protein uS8</fullName>
    </recommendedName>
    <alternativeName>
        <fullName evidence="2">30S ribosomal protein S8</fullName>
    </alternativeName>
</protein>
<name>RS8_METAR</name>
<dbReference type="EMBL" id="AM114193">
    <property type="protein sequence ID" value="CAJ37620.1"/>
    <property type="molecule type" value="Genomic_DNA"/>
</dbReference>
<dbReference type="RefSeq" id="WP_012034965.1">
    <property type="nucleotide sequence ID" value="NC_009464.1"/>
</dbReference>
<dbReference type="SMR" id="Q0W1X3"/>
<dbReference type="STRING" id="351160.RCIX2561"/>
<dbReference type="GeneID" id="5144738"/>
<dbReference type="KEGG" id="rci:RCIX2561"/>
<dbReference type="PATRIC" id="fig|351160.9.peg.663"/>
<dbReference type="eggNOG" id="arCOG04091">
    <property type="taxonomic scope" value="Archaea"/>
</dbReference>
<dbReference type="OrthoDB" id="5670at2157"/>
<dbReference type="Proteomes" id="UP000000663">
    <property type="component" value="Chromosome"/>
</dbReference>
<dbReference type="GO" id="GO:1990904">
    <property type="term" value="C:ribonucleoprotein complex"/>
    <property type="evidence" value="ECO:0007669"/>
    <property type="project" value="UniProtKB-KW"/>
</dbReference>
<dbReference type="GO" id="GO:0005840">
    <property type="term" value="C:ribosome"/>
    <property type="evidence" value="ECO:0007669"/>
    <property type="project" value="UniProtKB-KW"/>
</dbReference>
<dbReference type="GO" id="GO:0019843">
    <property type="term" value="F:rRNA binding"/>
    <property type="evidence" value="ECO:0007669"/>
    <property type="project" value="UniProtKB-UniRule"/>
</dbReference>
<dbReference type="GO" id="GO:0003735">
    <property type="term" value="F:structural constituent of ribosome"/>
    <property type="evidence" value="ECO:0007669"/>
    <property type="project" value="InterPro"/>
</dbReference>
<dbReference type="GO" id="GO:0006412">
    <property type="term" value="P:translation"/>
    <property type="evidence" value="ECO:0007669"/>
    <property type="project" value="UniProtKB-UniRule"/>
</dbReference>
<dbReference type="FunFam" id="3.30.1370.30:FF:000001">
    <property type="entry name" value="40S ribosomal protein S15a"/>
    <property type="match status" value="1"/>
</dbReference>
<dbReference type="FunFam" id="3.30.1490.10:FF:000002">
    <property type="entry name" value="40S ribosomal protein S15a"/>
    <property type="match status" value="1"/>
</dbReference>
<dbReference type="Gene3D" id="3.30.1370.30">
    <property type="match status" value="1"/>
</dbReference>
<dbReference type="Gene3D" id="3.30.1490.10">
    <property type="match status" value="1"/>
</dbReference>
<dbReference type="HAMAP" id="MF_01302_A">
    <property type="entry name" value="Ribosomal_uS8_A"/>
    <property type="match status" value="1"/>
</dbReference>
<dbReference type="InterPro" id="IPR000630">
    <property type="entry name" value="Ribosomal_uS8"/>
</dbReference>
<dbReference type="InterPro" id="IPR047863">
    <property type="entry name" value="Ribosomal_uS8_CS"/>
</dbReference>
<dbReference type="InterPro" id="IPR035987">
    <property type="entry name" value="Ribosomal_uS8_sf"/>
</dbReference>
<dbReference type="NCBIfam" id="NF003115">
    <property type="entry name" value="PRK04034.1"/>
    <property type="match status" value="1"/>
</dbReference>
<dbReference type="PANTHER" id="PTHR11758">
    <property type="entry name" value="40S RIBOSOMAL PROTEIN S15A"/>
    <property type="match status" value="1"/>
</dbReference>
<dbReference type="Pfam" id="PF00410">
    <property type="entry name" value="Ribosomal_S8"/>
    <property type="match status" value="1"/>
</dbReference>
<dbReference type="SUPFAM" id="SSF56047">
    <property type="entry name" value="Ribosomal protein S8"/>
    <property type="match status" value="1"/>
</dbReference>
<dbReference type="PROSITE" id="PS00053">
    <property type="entry name" value="RIBOSOMAL_S8"/>
    <property type="match status" value="1"/>
</dbReference>
<keyword id="KW-1185">Reference proteome</keyword>
<keyword id="KW-0687">Ribonucleoprotein</keyword>
<keyword id="KW-0689">Ribosomal protein</keyword>
<keyword id="KW-0694">RNA-binding</keyword>
<keyword id="KW-0699">rRNA-binding</keyword>
<gene>
    <name evidence="1" type="primary">rps8</name>
    <name type="ordered locus">UNCMA_06360</name>
    <name type="ORF">RCIX2561</name>
</gene>
<proteinExistence type="inferred from homology"/>
<feature type="chain" id="PRO_0000290971" description="Small ribosomal subunit protein uS8">
    <location>
        <begin position="1"/>
        <end position="130"/>
    </location>
</feature>